<name>CCG6_RAT</name>
<sequence>MMWSNFFMQEEDRRRTAVGRRRAQEQQNLGLTPEREGKIKLGLLVAIVGATLAVLAVGTEFWVELNTYKTNGSAVCEAAHLGLWKVCIKRLWQADVPAGRETCGPAELPGEANCTYFKFFTTGENAHIFQRTTKKEVNLAAAVIAVLGLTAMALGCLCVIMVLSKGAEFLLRLGAVCFGLSGLLLFVSLEVFRHSVRALLQGVNPETPPAPRLAYEYSWSLGCGVGAGLILLLGGVCFLLLTLPSWPWRSLCPKRGGPTA</sequence>
<feature type="chain" id="PRO_0000164686" description="Voltage-dependent calcium channel gamma-6 subunit">
    <location>
        <begin position="1"/>
        <end position="260"/>
    </location>
</feature>
<feature type="transmembrane region" description="Helical" evidence="2">
    <location>
        <begin position="43"/>
        <end position="63"/>
    </location>
</feature>
<feature type="transmembrane region" description="Helical" evidence="2">
    <location>
        <begin position="143"/>
        <end position="163"/>
    </location>
</feature>
<feature type="transmembrane region" description="Helical" evidence="2">
    <location>
        <begin position="169"/>
        <end position="189"/>
    </location>
</feature>
<feature type="transmembrane region" description="Helical" evidence="2">
    <location>
        <begin position="221"/>
        <end position="241"/>
    </location>
</feature>
<feature type="splice variant" id="VSP_005074" description="In isoform Short." evidence="5">
    <location>
        <begin position="136"/>
        <end position="181"/>
    </location>
</feature>
<dbReference type="EMBL" id="AF361343">
    <property type="protein sequence ID" value="AAL50038.1"/>
    <property type="molecule type" value="mRNA"/>
</dbReference>
<dbReference type="EMBL" id="AF361344">
    <property type="protein sequence ID" value="AAL50039.1"/>
    <property type="molecule type" value="mRNA"/>
</dbReference>
<dbReference type="RefSeq" id="NP_542425.1">
    <molecule id="Q8VHW7-1"/>
    <property type="nucleotide sequence ID" value="NM_080694.2"/>
</dbReference>
<dbReference type="RefSeq" id="XP_008756971.1">
    <molecule id="Q8VHW7-2"/>
    <property type="nucleotide sequence ID" value="XM_008758749.3"/>
</dbReference>
<dbReference type="SMR" id="Q8VHW7"/>
<dbReference type="FunCoup" id="Q8VHW7">
    <property type="interactions" value="454"/>
</dbReference>
<dbReference type="STRING" id="10116.ENSRNOP00000074853"/>
<dbReference type="GlyGen" id="Q8VHW7">
    <property type="glycosylation" value="1 site"/>
</dbReference>
<dbReference type="PhosphoSitePlus" id="Q8VHW7"/>
<dbReference type="PaxDb" id="10116-ENSRNOP00000019211"/>
<dbReference type="Ensembl" id="ENSRNOT00000106854.1">
    <molecule id="Q8VHW7-2"/>
    <property type="protein sequence ID" value="ENSRNOP00000092698.1"/>
    <property type="gene ID" value="ENSRNOG00000063051.1"/>
</dbReference>
<dbReference type="Ensembl" id="ENSRNOT00000111328.1">
    <molecule id="Q8VHW7-1"/>
    <property type="protein sequence ID" value="ENSRNOP00000095459.1"/>
    <property type="gene ID" value="ENSRNOG00000063051.1"/>
</dbReference>
<dbReference type="GeneID" id="140727"/>
<dbReference type="KEGG" id="rno:140727"/>
<dbReference type="UCSC" id="RGD:628806">
    <molecule id="Q8VHW7-1"/>
    <property type="organism name" value="rat"/>
</dbReference>
<dbReference type="AGR" id="RGD:628806"/>
<dbReference type="CTD" id="59285"/>
<dbReference type="RGD" id="628806">
    <property type="gene designation" value="Cacng6"/>
</dbReference>
<dbReference type="eggNOG" id="ENOG502QUPR">
    <property type="taxonomic scope" value="Eukaryota"/>
</dbReference>
<dbReference type="GeneTree" id="ENSGT00390000007786"/>
<dbReference type="HOGENOM" id="CLU_093876_0_0_1"/>
<dbReference type="InParanoid" id="Q8VHW7"/>
<dbReference type="OMA" id="PWQRCLP"/>
<dbReference type="OrthoDB" id="8890470at2759"/>
<dbReference type="PhylomeDB" id="Q8VHW7"/>
<dbReference type="TreeFam" id="TF331651"/>
<dbReference type="Reactome" id="R-RNO-5576892">
    <property type="pathway name" value="Phase 0 - rapid depolarisation"/>
</dbReference>
<dbReference type="Reactome" id="R-RNO-5576893">
    <property type="pathway name" value="Phase 2 - plateau phase"/>
</dbReference>
<dbReference type="PRO" id="PR:Q8VHW7"/>
<dbReference type="Proteomes" id="UP000002494">
    <property type="component" value="Chromosome 1"/>
</dbReference>
<dbReference type="Bgee" id="ENSRNOG00000057852">
    <property type="expression patterns" value="Expressed in skeletal muscle tissue and 8 other cell types or tissues"/>
</dbReference>
<dbReference type="GO" id="GO:1990454">
    <property type="term" value="C:L-type voltage-gated calcium channel complex"/>
    <property type="evidence" value="ECO:0000250"/>
    <property type="project" value="UniProtKB"/>
</dbReference>
<dbReference type="GO" id="GO:0005262">
    <property type="term" value="F:calcium channel activity"/>
    <property type="evidence" value="ECO:0007669"/>
    <property type="project" value="UniProtKB-KW"/>
</dbReference>
<dbReference type="GO" id="GO:0005246">
    <property type="term" value="F:calcium channel regulator activity"/>
    <property type="evidence" value="ECO:0000250"/>
    <property type="project" value="UniProtKB"/>
</dbReference>
<dbReference type="GO" id="GO:1902514">
    <property type="term" value="P:regulation of calcium ion transmembrane transport via high voltage-gated calcium channel"/>
    <property type="evidence" value="ECO:0000318"/>
    <property type="project" value="GO_Central"/>
</dbReference>
<dbReference type="FunFam" id="1.20.140.150:FF:000038">
    <property type="entry name" value="Voltage-dependent calcium channel gamma-6 subunit"/>
    <property type="match status" value="1"/>
</dbReference>
<dbReference type="Gene3D" id="1.20.140.150">
    <property type="match status" value="1"/>
</dbReference>
<dbReference type="InterPro" id="IPR004031">
    <property type="entry name" value="PMP22/EMP/MP20/Claudin"/>
</dbReference>
<dbReference type="InterPro" id="IPR008370">
    <property type="entry name" value="VDCC_g6su"/>
</dbReference>
<dbReference type="InterPro" id="IPR008368">
    <property type="entry name" value="VDCC_gsu"/>
</dbReference>
<dbReference type="PANTHER" id="PTHR15025">
    <property type="entry name" value="VOLTAGE-DEPENDENT CALCIUM CHANNEL GAMMA-1 SUBUNIT-RELATED"/>
    <property type="match status" value="1"/>
</dbReference>
<dbReference type="PANTHER" id="PTHR15025:SF6">
    <property type="entry name" value="VOLTAGE-DEPENDENT CALCIUM CHANNEL GAMMA-6 SUBUNIT"/>
    <property type="match status" value="1"/>
</dbReference>
<dbReference type="Pfam" id="PF13903">
    <property type="entry name" value="Claudin_2"/>
    <property type="match status" value="1"/>
</dbReference>
<dbReference type="PRINTS" id="PR01792">
    <property type="entry name" value="VDCCGAMMA"/>
</dbReference>
<dbReference type="PRINTS" id="PR01794">
    <property type="entry name" value="VDCCGAMMA6"/>
</dbReference>
<reference key="1">
    <citation type="journal article" date="2001" name="Gene">
        <title>Calcium channel gamma subunits provide insights into the evolution of this gene family.</title>
        <authorList>
            <person name="Chu P.-J."/>
            <person name="Robertson H.M."/>
            <person name="Best P.M."/>
        </authorList>
    </citation>
    <scope>NUCLEOTIDE SEQUENCE [MRNA] (ISOFORMS LONG AND SHORT)</scope>
    <scope>TISSUE SPECIFICITY</scope>
    <source>
        <strain>Sprague-Dawley</strain>
    </source>
</reference>
<reference key="2">
    <citation type="journal article" date="2011" name="FASEB J.">
        <title>Cardiac L-type calcium channel (Cav1.2) associates with gamma subunits.</title>
        <authorList>
            <person name="Yang L."/>
            <person name="Katchman A."/>
            <person name="Morrow J.P."/>
            <person name="Doshi D."/>
            <person name="Marx S.O."/>
        </authorList>
    </citation>
    <scope>TISSUE SPECIFICITY</scope>
</reference>
<organism>
    <name type="scientific">Rattus norvegicus</name>
    <name type="common">Rat</name>
    <dbReference type="NCBI Taxonomy" id="10116"/>
    <lineage>
        <taxon>Eukaryota</taxon>
        <taxon>Metazoa</taxon>
        <taxon>Chordata</taxon>
        <taxon>Craniata</taxon>
        <taxon>Vertebrata</taxon>
        <taxon>Euteleostomi</taxon>
        <taxon>Mammalia</taxon>
        <taxon>Eutheria</taxon>
        <taxon>Euarchontoglires</taxon>
        <taxon>Glires</taxon>
        <taxon>Rodentia</taxon>
        <taxon>Myomorpha</taxon>
        <taxon>Muroidea</taxon>
        <taxon>Muridae</taxon>
        <taxon>Murinae</taxon>
        <taxon>Rattus</taxon>
    </lineage>
</organism>
<evidence type="ECO:0000250" key="1">
    <source>
        <dbReference type="UniProtKB" id="Q9BXT2"/>
    </source>
</evidence>
<evidence type="ECO:0000255" key="2"/>
<evidence type="ECO:0000269" key="3">
    <source>
    </source>
</evidence>
<evidence type="ECO:0000269" key="4">
    <source>
    </source>
</evidence>
<evidence type="ECO:0000303" key="5">
    <source>
    </source>
</evidence>
<evidence type="ECO:0000305" key="6"/>
<comment type="function">
    <text evidence="1">Regulates the activity of L-type calcium channels that contain CACNA1C as pore-forming subunit.</text>
</comment>
<comment type="subunit">
    <text evidence="1">Interacts with CACNA1C. Identified in a complex with the L-type calcium channel subunits CACNA1C, CACNA2D1 and either CACNB1 or CACNB2.</text>
</comment>
<comment type="subcellular location">
    <subcellularLocation>
        <location evidence="1">Cell membrane</location>
        <topology evidence="1">Multi-pass membrane protein</topology>
    </subcellularLocation>
</comment>
<comment type="alternative products">
    <event type="alternative splicing"/>
    <isoform>
        <id>Q8VHW7-1</id>
        <name>Long</name>
        <sequence type="displayed"/>
    </isoform>
    <isoform>
        <id>Q8VHW7-2</id>
        <name>Short</name>
        <sequence type="described" ref="VSP_005074"/>
    </isoform>
</comment>
<comment type="tissue specificity">
    <text evidence="3 4">Detected in heart atrium and ventricle, aorta and skeletal muscle (PubMed:11738816). Detected in heart left ventricle (PubMed:21127204).</text>
</comment>
<comment type="similarity">
    <text evidence="6">Belongs to the PMP-22/EMP/MP20 family. CACNG subfamily.</text>
</comment>
<gene>
    <name type="primary">Cacng6</name>
</gene>
<proteinExistence type="evidence at transcript level"/>
<keyword id="KW-0025">Alternative splicing</keyword>
<keyword id="KW-0106">Calcium</keyword>
<keyword id="KW-0107">Calcium channel</keyword>
<keyword id="KW-0109">Calcium transport</keyword>
<keyword id="KW-1003">Cell membrane</keyword>
<keyword id="KW-0407">Ion channel</keyword>
<keyword id="KW-0406">Ion transport</keyword>
<keyword id="KW-0472">Membrane</keyword>
<keyword id="KW-1185">Reference proteome</keyword>
<keyword id="KW-0812">Transmembrane</keyword>
<keyword id="KW-1133">Transmembrane helix</keyword>
<keyword id="KW-0813">Transport</keyword>
<keyword id="KW-0851">Voltage-gated channel</keyword>
<accession>Q8VHW7</accession>
<accession>Q8VHW6</accession>
<protein>
    <recommendedName>
        <fullName>Voltage-dependent calcium channel gamma-6 subunit</fullName>
    </recommendedName>
    <alternativeName>
        <fullName>Neuronal voltage-gated calcium channel gamma-6 subunit</fullName>
    </alternativeName>
</protein>